<evidence type="ECO:0000250" key="1"/>
<evidence type="ECO:0000255" key="2"/>
<evidence type="ECO:0000269" key="3">
    <source>
    </source>
</evidence>
<evidence type="ECO:0000269" key="4">
    <source>
    </source>
</evidence>
<evidence type="ECO:0000303" key="5">
    <source>
    </source>
</evidence>
<evidence type="ECO:0000305" key="6"/>
<evidence type="ECO:0000305" key="7">
    <source>
    </source>
</evidence>
<name>B3GT6_ARATH</name>
<dbReference type="EC" id="2.4.1.-" evidence="6"/>
<dbReference type="EMBL" id="KJ138975">
    <property type="protein sequence ID" value="AHL38915.1"/>
    <property type="molecule type" value="mRNA"/>
</dbReference>
<dbReference type="EMBL" id="AC006424">
    <property type="protein sequence ID" value="AAF31275.1"/>
    <property type="molecule type" value="Genomic_DNA"/>
</dbReference>
<dbReference type="EMBL" id="CP002684">
    <property type="protein sequence ID" value="AEE31541.1"/>
    <property type="molecule type" value="Genomic_DNA"/>
</dbReference>
<dbReference type="EMBL" id="BT006435">
    <property type="protein sequence ID" value="AAP21243.1"/>
    <property type="molecule type" value="mRNA"/>
</dbReference>
<dbReference type="EMBL" id="AK227878">
    <property type="protein sequence ID" value="BAE99853.1"/>
    <property type="molecule type" value="mRNA"/>
</dbReference>
<dbReference type="PIR" id="H86453">
    <property type="entry name" value="H86453"/>
</dbReference>
<dbReference type="RefSeq" id="NP_174569.1">
    <property type="nucleotide sequence ID" value="NM_103026.4"/>
</dbReference>
<dbReference type="SMR" id="Q9MAP8"/>
<dbReference type="FunCoup" id="Q9MAP8">
    <property type="interactions" value="1841"/>
</dbReference>
<dbReference type="STRING" id="3702.Q9MAP8"/>
<dbReference type="CAZy" id="GT31">
    <property type="family name" value="Glycosyltransferase Family 31"/>
</dbReference>
<dbReference type="iPTMnet" id="Q9MAP8"/>
<dbReference type="PaxDb" id="3702-AT1G32930.1"/>
<dbReference type="ProteomicsDB" id="241116"/>
<dbReference type="EnsemblPlants" id="AT1G32930.1">
    <property type="protein sequence ID" value="AT1G32930.1"/>
    <property type="gene ID" value="AT1G32930"/>
</dbReference>
<dbReference type="GeneID" id="840187"/>
<dbReference type="Gramene" id="AT1G32930.1">
    <property type="protein sequence ID" value="AT1G32930.1"/>
    <property type="gene ID" value="AT1G32930"/>
</dbReference>
<dbReference type="KEGG" id="ath:AT1G32930"/>
<dbReference type="Araport" id="AT1G32930"/>
<dbReference type="TAIR" id="AT1G32930">
    <property type="gene designation" value="GALT31A"/>
</dbReference>
<dbReference type="eggNOG" id="KOG2288">
    <property type="taxonomic scope" value="Eukaryota"/>
</dbReference>
<dbReference type="HOGENOM" id="CLU_040730_3_0_1"/>
<dbReference type="InParanoid" id="Q9MAP8"/>
<dbReference type="OMA" id="TYISVHR"/>
<dbReference type="OrthoDB" id="1158011at2759"/>
<dbReference type="PhylomeDB" id="Q9MAP8"/>
<dbReference type="UniPathway" id="UPA00378"/>
<dbReference type="PRO" id="PR:Q9MAP8"/>
<dbReference type="Proteomes" id="UP000006548">
    <property type="component" value="Chromosome 1"/>
</dbReference>
<dbReference type="ExpressionAtlas" id="Q9MAP8">
    <property type="expression patterns" value="baseline and differential"/>
</dbReference>
<dbReference type="GO" id="GO:0000139">
    <property type="term" value="C:Golgi membrane"/>
    <property type="evidence" value="ECO:0000314"/>
    <property type="project" value="UniProtKB"/>
</dbReference>
<dbReference type="GO" id="GO:0008378">
    <property type="term" value="F:galactosyltransferase activity"/>
    <property type="evidence" value="ECO:0000314"/>
    <property type="project" value="UniProtKB"/>
</dbReference>
<dbReference type="GO" id="GO:0009793">
    <property type="term" value="P:embryo development ending in seed dormancy"/>
    <property type="evidence" value="ECO:0000315"/>
    <property type="project" value="UniProtKB"/>
</dbReference>
<dbReference type="GO" id="GO:0006486">
    <property type="term" value="P:protein glycosylation"/>
    <property type="evidence" value="ECO:0007669"/>
    <property type="project" value="UniProtKB-UniPathway"/>
</dbReference>
<dbReference type="FunFam" id="3.90.550.50:FF:000002">
    <property type="entry name" value="Hexosyltransferase"/>
    <property type="match status" value="1"/>
</dbReference>
<dbReference type="Gene3D" id="3.90.550.50">
    <property type="match status" value="1"/>
</dbReference>
<dbReference type="InterPro" id="IPR025298">
    <property type="entry name" value="DUF4094"/>
</dbReference>
<dbReference type="InterPro" id="IPR002659">
    <property type="entry name" value="Glyco_trans_31"/>
</dbReference>
<dbReference type="PANTHER" id="PTHR11214">
    <property type="entry name" value="BETA-1,3-N-ACETYLGLUCOSAMINYLTRANSFERASE"/>
    <property type="match status" value="1"/>
</dbReference>
<dbReference type="PANTHER" id="PTHR11214:SF123">
    <property type="entry name" value="BETA-1,6-GALACTOSYLTRANSFERASE GALT31A"/>
    <property type="match status" value="1"/>
</dbReference>
<dbReference type="Pfam" id="PF13334">
    <property type="entry name" value="DUF4094"/>
    <property type="match status" value="1"/>
</dbReference>
<dbReference type="Pfam" id="PF01762">
    <property type="entry name" value="Galactosyl_T"/>
    <property type="match status" value="1"/>
</dbReference>
<protein>
    <recommendedName>
        <fullName evidence="6">Beta-1,6-galactosyltransferase GALT31A</fullName>
        <ecNumber evidence="6">2.4.1.-</ecNumber>
    </recommendedName>
    <alternativeName>
        <fullName evidence="7">Beta-1,3-galactosyltransferase 6</fullName>
    </alternativeName>
    <alternativeName>
        <fullName evidence="6">GT31 family galactosyltransferase 1</fullName>
        <shortName evidence="5">AtGALT31A</shortName>
    </alternativeName>
</protein>
<organism>
    <name type="scientific">Arabidopsis thaliana</name>
    <name type="common">Mouse-ear cress</name>
    <dbReference type="NCBI Taxonomy" id="3702"/>
    <lineage>
        <taxon>Eukaryota</taxon>
        <taxon>Viridiplantae</taxon>
        <taxon>Streptophyta</taxon>
        <taxon>Embryophyta</taxon>
        <taxon>Tracheophyta</taxon>
        <taxon>Spermatophyta</taxon>
        <taxon>Magnoliopsida</taxon>
        <taxon>eudicotyledons</taxon>
        <taxon>Gunneridae</taxon>
        <taxon>Pentapetalae</taxon>
        <taxon>rosids</taxon>
        <taxon>malvids</taxon>
        <taxon>Brassicales</taxon>
        <taxon>Brassicaceae</taxon>
        <taxon>Camelineae</taxon>
        <taxon>Arabidopsis</taxon>
    </lineage>
</organism>
<comment type="function">
    <text evidence="3 4">Beta-galactosyltransferase involved in elongation of beta-1,6-linked galactan side chains on arabinogalactan proteins. Required for the progression of embryogenesis beyond the globular stage (PubMed:23837821). Beta-galactosyltransferase involved in the biosynthesis of type II arabinogalactan. Transfers galactose from UDP-galactose to a mixture of various oligosaccharides derived from arabinogalactan proteins. Forms a complex with GALT29A that can work cooperatively to enhance the activities of adding galactose residues at O6 positions to beta-1,6-linked galactan and beta-1,3-linked galactan (PubMed:24693939).</text>
</comment>
<comment type="cofactor">
    <cofactor evidence="1">
        <name>Mn(2+)</name>
        <dbReference type="ChEBI" id="CHEBI:29035"/>
    </cofactor>
</comment>
<comment type="pathway">
    <text>Protein modification; protein glycosylation.</text>
</comment>
<comment type="subunit">
    <text evidence="4">Interacts with GALT29A.</text>
</comment>
<comment type="subcellular location">
    <subcellularLocation>
        <location evidence="3 4">Golgi apparatus membrane</location>
        <topology evidence="6">Single-pass type II membrane protein</topology>
    </subcellularLocation>
</comment>
<comment type="developmental stage">
    <text evidence="3">Expressed in the suspensor of globular stage embryos.</text>
</comment>
<comment type="disruption phenotype">
    <text evidence="3">Embryonic lethality, due to the arrest of embryo development at the globular stage.</text>
</comment>
<comment type="similarity">
    <text evidence="6">Belongs to the glycosyltransferase 31 family.</text>
</comment>
<sequence>MGMGRYQKSATSGVSARWVFVLCISSFLLGVLVVNRLLASFETVDGIERASPEQNDQSRSLNPLVDCESKEGDILSRVSHTHDVIKTLDKTISSLEVELATARAARSDGRDGSPAVAKTVADQSKIRPRMFFVMGIMTAFSSRKRRDSIRGTWLPKGDELKRLETEKGIIMRFVIGHSSSPGGVLDHTIEAEEEQHKDFFRLNHIEGYHELSSKTQIYFSSAVAKWDADFYIKVDDDVHVNLGMLGSTLARHRSKPRVYIGCMKSGPVLAQKGVKYHEPEYWKFGEEGNKYFRHATGQIYAISKDLATYISVNRQLLHKYANEDVSLGSWFIGLDVEHIDDRSLCCGTPLDCEWKGQAGNPCAASFDWSCSGICKSVDRMLEVHQRCGEGDGAIWHSSF</sequence>
<accession>Q9MAP8</accession>
<accession>W8Q3Q1</accession>
<gene>
    <name evidence="5" type="primary">GALT31A</name>
    <name evidence="7" type="synonym">B3GALT6</name>
    <name type="ordered locus">At1g32930</name>
    <name type="ORF">F9L11.10</name>
</gene>
<reference key="1">
    <citation type="journal article" date="2014" name="Plant J.">
        <title>The plant glycosyltransferase clone collection for functional genomics.</title>
        <authorList>
            <person name="Lao J."/>
            <person name="Oikawa A."/>
            <person name="Bromley J.R."/>
            <person name="McInerney P."/>
            <person name="Suttangkakul A."/>
            <person name="Smith-Moritz A.M."/>
            <person name="Plahar H."/>
            <person name="Chiu T.-Y."/>
            <person name="Gonzalez Fernandez-Nino S.M.G."/>
            <person name="Ebert B."/>
            <person name="Yang F."/>
            <person name="Christiansen K.M."/>
            <person name="Hansen S.F."/>
            <person name="Stonebloom S."/>
            <person name="Adams P.D."/>
            <person name="Ronald P.C."/>
            <person name="Hillson N.J."/>
            <person name="Hadi M.Z."/>
            <person name="Vega-Sanchez M.E."/>
            <person name="Loque D."/>
            <person name="Scheller H.V."/>
            <person name="Heazlewood J.L."/>
        </authorList>
    </citation>
    <scope>NUCLEOTIDE SEQUENCE [MRNA]</scope>
    <source>
        <strain>cv. Columbia</strain>
    </source>
</reference>
<reference key="2">
    <citation type="journal article" date="2000" name="Nature">
        <title>Sequence and analysis of chromosome 1 of the plant Arabidopsis thaliana.</title>
        <authorList>
            <person name="Theologis A."/>
            <person name="Ecker J.R."/>
            <person name="Palm C.J."/>
            <person name="Federspiel N.A."/>
            <person name="Kaul S."/>
            <person name="White O."/>
            <person name="Alonso J."/>
            <person name="Altafi H."/>
            <person name="Araujo R."/>
            <person name="Bowman C.L."/>
            <person name="Brooks S.Y."/>
            <person name="Buehler E."/>
            <person name="Chan A."/>
            <person name="Chao Q."/>
            <person name="Chen H."/>
            <person name="Cheuk R.F."/>
            <person name="Chin C.W."/>
            <person name="Chung M.K."/>
            <person name="Conn L."/>
            <person name="Conway A.B."/>
            <person name="Conway A.R."/>
            <person name="Creasy T.H."/>
            <person name="Dewar K."/>
            <person name="Dunn P."/>
            <person name="Etgu P."/>
            <person name="Feldblyum T.V."/>
            <person name="Feng J.-D."/>
            <person name="Fong B."/>
            <person name="Fujii C.Y."/>
            <person name="Gill J.E."/>
            <person name="Goldsmith A.D."/>
            <person name="Haas B."/>
            <person name="Hansen N.F."/>
            <person name="Hughes B."/>
            <person name="Huizar L."/>
            <person name="Hunter J.L."/>
            <person name="Jenkins J."/>
            <person name="Johnson-Hopson C."/>
            <person name="Khan S."/>
            <person name="Khaykin E."/>
            <person name="Kim C.J."/>
            <person name="Koo H.L."/>
            <person name="Kremenetskaia I."/>
            <person name="Kurtz D.B."/>
            <person name="Kwan A."/>
            <person name="Lam B."/>
            <person name="Langin-Hooper S."/>
            <person name="Lee A."/>
            <person name="Lee J.M."/>
            <person name="Lenz C.A."/>
            <person name="Li J.H."/>
            <person name="Li Y.-P."/>
            <person name="Lin X."/>
            <person name="Liu S.X."/>
            <person name="Liu Z.A."/>
            <person name="Luros J.S."/>
            <person name="Maiti R."/>
            <person name="Marziali A."/>
            <person name="Militscher J."/>
            <person name="Miranda M."/>
            <person name="Nguyen M."/>
            <person name="Nierman W.C."/>
            <person name="Osborne B.I."/>
            <person name="Pai G."/>
            <person name="Peterson J."/>
            <person name="Pham P.K."/>
            <person name="Rizzo M."/>
            <person name="Rooney T."/>
            <person name="Rowley D."/>
            <person name="Sakano H."/>
            <person name="Salzberg S.L."/>
            <person name="Schwartz J.R."/>
            <person name="Shinn P."/>
            <person name="Southwick A.M."/>
            <person name="Sun H."/>
            <person name="Tallon L.J."/>
            <person name="Tambunga G."/>
            <person name="Toriumi M.J."/>
            <person name="Town C.D."/>
            <person name="Utterback T."/>
            <person name="Van Aken S."/>
            <person name="Vaysberg M."/>
            <person name="Vysotskaia V.S."/>
            <person name="Walker M."/>
            <person name="Wu D."/>
            <person name="Yu G."/>
            <person name="Fraser C.M."/>
            <person name="Venter J.C."/>
            <person name="Davis R.W."/>
        </authorList>
    </citation>
    <scope>NUCLEOTIDE SEQUENCE [LARGE SCALE GENOMIC DNA]</scope>
    <source>
        <strain>cv. Columbia</strain>
    </source>
</reference>
<reference key="3">
    <citation type="journal article" date="2017" name="Plant J.">
        <title>Araport11: a complete reannotation of the Arabidopsis thaliana reference genome.</title>
        <authorList>
            <person name="Cheng C.Y."/>
            <person name="Krishnakumar V."/>
            <person name="Chan A.P."/>
            <person name="Thibaud-Nissen F."/>
            <person name="Schobel S."/>
            <person name="Town C.D."/>
        </authorList>
    </citation>
    <scope>GENOME REANNOTATION</scope>
    <source>
        <strain>cv. Columbia</strain>
    </source>
</reference>
<reference key="4">
    <citation type="journal article" date="2003" name="Science">
        <title>Empirical analysis of transcriptional activity in the Arabidopsis genome.</title>
        <authorList>
            <person name="Yamada K."/>
            <person name="Lim J."/>
            <person name="Dale J.M."/>
            <person name="Chen H."/>
            <person name="Shinn P."/>
            <person name="Palm C.J."/>
            <person name="Southwick A.M."/>
            <person name="Wu H.C."/>
            <person name="Kim C.J."/>
            <person name="Nguyen M."/>
            <person name="Pham P.K."/>
            <person name="Cheuk R.F."/>
            <person name="Karlin-Newmann G."/>
            <person name="Liu S.X."/>
            <person name="Lam B."/>
            <person name="Sakano H."/>
            <person name="Wu T."/>
            <person name="Yu G."/>
            <person name="Miranda M."/>
            <person name="Quach H.L."/>
            <person name="Tripp M."/>
            <person name="Chang C.H."/>
            <person name="Lee J.M."/>
            <person name="Toriumi M.J."/>
            <person name="Chan M.M."/>
            <person name="Tang C.C."/>
            <person name="Onodera C.S."/>
            <person name="Deng J.M."/>
            <person name="Akiyama K."/>
            <person name="Ansari Y."/>
            <person name="Arakawa T."/>
            <person name="Banh J."/>
            <person name="Banno F."/>
            <person name="Bowser L."/>
            <person name="Brooks S.Y."/>
            <person name="Carninci P."/>
            <person name="Chao Q."/>
            <person name="Choy N."/>
            <person name="Enju A."/>
            <person name="Goldsmith A.D."/>
            <person name="Gurjal M."/>
            <person name="Hansen N.F."/>
            <person name="Hayashizaki Y."/>
            <person name="Johnson-Hopson C."/>
            <person name="Hsuan V.W."/>
            <person name="Iida K."/>
            <person name="Karnes M."/>
            <person name="Khan S."/>
            <person name="Koesema E."/>
            <person name="Ishida J."/>
            <person name="Jiang P.X."/>
            <person name="Jones T."/>
            <person name="Kawai J."/>
            <person name="Kamiya A."/>
            <person name="Meyers C."/>
            <person name="Nakajima M."/>
            <person name="Narusaka M."/>
            <person name="Seki M."/>
            <person name="Sakurai T."/>
            <person name="Satou M."/>
            <person name="Tamse R."/>
            <person name="Vaysberg M."/>
            <person name="Wallender E.K."/>
            <person name="Wong C."/>
            <person name="Yamamura Y."/>
            <person name="Yuan S."/>
            <person name="Shinozaki K."/>
            <person name="Davis R.W."/>
            <person name="Theologis A."/>
            <person name="Ecker J.R."/>
        </authorList>
    </citation>
    <scope>NUCLEOTIDE SEQUENCE [LARGE SCALE MRNA]</scope>
    <source>
        <strain>cv. Columbia</strain>
    </source>
</reference>
<reference key="5">
    <citation type="submission" date="2006-07" db="EMBL/GenBank/DDBJ databases">
        <title>Large-scale analysis of RIKEN Arabidopsis full-length (RAFL) cDNAs.</title>
        <authorList>
            <person name="Totoki Y."/>
            <person name="Seki M."/>
            <person name="Ishida J."/>
            <person name="Nakajima M."/>
            <person name="Enju A."/>
            <person name="Kamiya A."/>
            <person name="Narusaka M."/>
            <person name="Shin-i T."/>
            <person name="Nakagawa M."/>
            <person name="Sakamoto N."/>
            <person name="Oishi K."/>
            <person name="Kohara Y."/>
            <person name="Kobayashi M."/>
            <person name="Toyoda A."/>
            <person name="Sakaki Y."/>
            <person name="Sakurai T."/>
            <person name="Iida K."/>
            <person name="Akiyama K."/>
            <person name="Satou M."/>
            <person name="Toyoda T."/>
            <person name="Konagaya A."/>
            <person name="Carninci P."/>
            <person name="Kawai J."/>
            <person name="Hayashizaki Y."/>
            <person name="Shinozaki K."/>
        </authorList>
    </citation>
    <scope>NUCLEOTIDE SEQUENCE [LARGE SCALE MRNA]</scope>
    <source>
        <strain>cv. Columbia</strain>
    </source>
</reference>
<reference key="6">
    <citation type="journal article" date="2008" name="Plant Mol. Biol.">
        <title>Identification of a novel group of putative Arabidopsis thaliana beta-(1,3)-galactosyltransferases.</title>
        <authorList>
            <person name="Qu Y."/>
            <person name="Egelund J."/>
            <person name="Gilson P.R."/>
            <person name="Houghton F."/>
            <person name="Gleeson P.A."/>
            <person name="Schultz C.J."/>
            <person name="Bacic A."/>
        </authorList>
    </citation>
    <scope>GENE FAMILY</scope>
    <scope>NOMENCLATURE</scope>
</reference>
<reference key="7">
    <citation type="journal article" date="2013" name="Plant J.">
        <title>A galactosyltransferase acting on arabinogalactan protein glycans is essential for embryo development in Arabidopsis.</title>
        <authorList>
            <person name="Geshi N."/>
            <person name="Johansen J.N."/>
            <person name="Dilokpimol A."/>
            <person name="Rolland A."/>
            <person name="Belcram K."/>
            <person name="Verger S."/>
            <person name="Kotake T."/>
            <person name="Tsumuraya Y."/>
            <person name="Kaneko S."/>
            <person name="Tryfona T."/>
            <person name="Dupree P."/>
            <person name="Scheller H.V."/>
            <person name="Hoefte H."/>
            <person name="Mouille G."/>
        </authorList>
    </citation>
    <scope>FUNCTION</scope>
    <scope>SUBCELLULAR LOCATION</scope>
    <scope>DEVELOPMENTAL STAGE</scope>
    <scope>DISRUPTION PHENOTYPE</scope>
</reference>
<reference key="8">
    <citation type="journal article" date="2014" name="BMC Plant Biol.">
        <title>Galactosyltransferases from Arabidopsis thaliana in the biosynthesis of type II arabinogalactan: molecular interaction enhances enzyme activity.</title>
        <authorList>
            <person name="Dilokpimol A."/>
            <person name="Poulsen C.P."/>
            <person name="Vereb G."/>
            <person name="Kaneko S."/>
            <person name="Schulz A."/>
            <person name="Geshi N."/>
        </authorList>
    </citation>
    <scope>FUNCTION</scope>
    <scope>INTERACTION WITH GALT29A</scope>
    <scope>SUBCELLULAR LOCATION</scope>
</reference>
<feature type="chain" id="PRO_0000359416" description="Beta-1,6-galactosyltransferase GALT31A">
    <location>
        <begin position="1"/>
        <end position="399"/>
    </location>
</feature>
<feature type="topological domain" description="Cytoplasmic" evidence="6">
    <location>
        <begin position="1"/>
        <end position="12"/>
    </location>
</feature>
<feature type="transmembrane region" description="Helical; Signal-anchor for type II membrane protein" evidence="2">
    <location>
        <begin position="13"/>
        <end position="35"/>
    </location>
</feature>
<feature type="topological domain" description="Lumenal" evidence="6">
    <location>
        <begin position="36"/>
        <end position="399"/>
    </location>
</feature>
<proteinExistence type="evidence at protein level"/>
<keyword id="KW-0328">Glycosyltransferase</keyword>
<keyword id="KW-0333">Golgi apparatus</keyword>
<keyword id="KW-0464">Manganese</keyword>
<keyword id="KW-0472">Membrane</keyword>
<keyword id="KW-1185">Reference proteome</keyword>
<keyword id="KW-0735">Signal-anchor</keyword>
<keyword id="KW-0808">Transferase</keyword>
<keyword id="KW-0812">Transmembrane</keyword>
<keyword id="KW-1133">Transmembrane helix</keyword>